<gene>
    <name type="ordered locus">LSEI_1522</name>
</gene>
<feature type="chain" id="PRO_0000316686" description="Putative pyruvate, phosphate dikinase regulatory protein">
    <location>
        <begin position="1"/>
        <end position="276"/>
    </location>
</feature>
<feature type="binding site" evidence="1">
    <location>
        <begin position="150"/>
        <end position="157"/>
    </location>
    <ligand>
        <name>ADP</name>
        <dbReference type="ChEBI" id="CHEBI:456216"/>
    </ligand>
</feature>
<comment type="function">
    <text evidence="1">Bifunctional serine/threonine kinase and phosphorylase involved in the regulation of the pyruvate, phosphate dikinase (PPDK) by catalyzing its phosphorylation/dephosphorylation.</text>
</comment>
<comment type="catalytic activity">
    <reaction evidence="1">
        <text>N(tele)-phospho-L-histidyl/L-threonyl-[pyruvate, phosphate dikinase] + ADP = N(tele)-phospho-L-histidyl/O-phospho-L-threonyl-[pyruvate, phosphate dikinase] + AMP + H(+)</text>
        <dbReference type="Rhea" id="RHEA:43692"/>
        <dbReference type="Rhea" id="RHEA-COMP:10650"/>
        <dbReference type="Rhea" id="RHEA-COMP:10651"/>
        <dbReference type="ChEBI" id="CHEBI:15378"/>
        <dbReference type="ChEBI" id="CHEBI:30013"/>
        <dbReference type="ChEBI" id="CHEBI:61977"/>
        <dbReference type="ChEBI" id="CHEBI:83586"/>
        <dbReference type="ChEBI" id="CHEBI:456215"/>
        <dbReference type="ChEBI" id="CHEBI:456216"/>
        <dbReference type="EC" id="2.7.11.32"/>
    </reaction>
</comment>
<comment type="catalytic activity">
    <reaction evidence="1">
        <text>N(tele)-phospho-L-histidyl/O-phospho-L-threonyl-[pyruvate, phosphate dikinase] + phosphate + H(+) = N(tele)-phospho-L-histidyl/L-threonyl-[pyruvate, phosphate dikinase] + diphosphate</text>
        <dbReference type="Rhea" id="RHEA:43696"/>
        <dbReference type="Rhea" id="RHEA-COMP:10650"/>
        <dbReference type="Rhea" id="RHEA-COMP:10651"/>
        <dbReference type="ChEBI" id="CHEBI:15378"/>
        <dbReference type="ChEBI" id="CHEBI:30013"/>
        <dbReference type="ChEBI" id="CHEBI:33019"/>
        <dbReference type="ChEBI" id="CHEBI:43474"/>
        <dbReference type="ChEBI" id="CHEBI:61977"/>
        <dbReference type="ChEBI" id="CHEBI:83586"/>
        <dbReference type="EC" id="2.7.4.27"/>
    </reaction>
</comment>
<comment type="similarity">
    <text evidence="1">Belongs to the pyruvate, phosphate/water dikinase regulatory protein family. PDRP subfamily.</text>
</comment>
<name>PDRP_LACP3</name>
<reference key="1">
    <citation type="journal article" date="2006" name="Proc. Natl. Acad. Sci. U.S.A.">
        <title>Comparative genomics of the lactic acid bacteria.</title>
        <authorList>
            <person name="Makarova K.S."/>
            <person name="Slesarev A."/>
            <person name="Wolf Y.I."/>
            <person name="Sorokin A."/>
            <person name="Mirkin B."/>
            <person name="Koonin E.V."/>
            <person name="Pavlov A."/>
            <person name="Pavlova N."/>
            <person name="Karamychev V."/>
            <person name="Polouchine N."/>
            <person name="Shakhova V."/>
            <person name="Grigoriev I."/>
            <person name="Lou Y."/>
            <person name="Rohksar D."/>
            <person name="Lucas S."/>
            <person name="Huang K."/>
            <person name="Goodstein D.M."/>
            <person name="Hawkins T."/>
            <person name="Plengvidhya V."/>
            <person name="Welker D."/>
            <person name="Hughes J."/>
            <person name="Goh Y."/>
            <person name="Benson A."/>
            <person name="Baldwin K."/>
            <person name="Lee J.-H."/>
            <person name="Diaz-Muniz I."/>
            <person name="Dosti B."/>
            <person name="Smeianov V."/>
            <person name="Wechter W."/>
            <person name="Barabote R."/>
            <person name="Lorca G."/>
            <person name="Altermann E."/>
            <person name="Barrangou R."/>
            <person name="Ganesan B."/>
            <person name="Xie Y."/>
            <person name="Rawsthorne H."/>
            <person name="Tamir D."/>
            <person name="Parker C."/>
            <person name="Breidt F."/>
            <person name="Broadbent J.R."/>
            <person name="Hutkins R."/>
            <person name="O'Sullivan D."/>
            <person name="Steele J."/>
            <person name="Unlu G."/>
            <person name="Saier M.H. Jr."/>
            <person name="Klaenhammer T."/>
            <person name="Richardson P."/>
            <person name="Kozyavkin S."/>
            <person name="Weimer B.C."/>
            <person name="Mills D.A."/>
        </authorList>
    </citation>
    <scope>NUCLEOTIDE SEQUENCE [LARGE SCALE GENOMIC DNA]</scope>
    <source>
        <strain>ATCC 334 / BCRC 17002 / CCUG 31169 / CIP 107868 / KCTC 3260 / NRRL B-441</strain>
    </source>
</reference>
<proteinExistence type="inferred from homology"/>
<protein>
    <recommendedName>
        <fullName evidence="1">Putative pyruvate, phosphate dikinase regulatory protein</fullName>
        <shortName evidence="1">PPDK regulatory protein</shortName>
        <ecNumber evidence="1">2.7.11.32</ecNumber>
        <ecNumber evidence="1">2.7.4.27</ecNumber>
    </recommendedName>
</protein>
<organism>
    <name type="scientific">Lacticaseibacillus paracasei (strain ATCC 334 / BCRC 17002 / CCUG 31169 / CIP 107868 / KCTC 3260 / NRRL B-441)</name>
    <name type="common">Lactobacillus paracasei</name>
    <dbReference type="NCBI Taxonomy" id="321967"/>
    <lineage>
        <taxon>Bacteria</taxon>
        <taxon>Bacillati</taxon>
        <taxon>Bacillota</taxon>
        <taxon>Bacilli</taxon>
        <taxon>Lactobacillales</taxon>
        <taxon>Lactobacillaceae</taxon>
        <taxon>Lacticaseibacillus</taxon>
    </lineage>
</organism>
<sequence length="276" mass="30900">MTQELNLYIMSDSVGETGLRLAQAVAAQFPNFEAHYVRFPFIHTEEKIYSALDEAKKENALAIMTFVTSGFAQLATHYAKDQGVIAIDVMSPILSGIKSITHEEPNHVPGAVHDLNERYFDRISAMEFAVLYDDGKDPKGFLEADIVLLGVSRTSKTPLSLFLANRNLKVANLPLVPNAHIPEEIWSVDPKKIVGLTTDASVLMEFRRQRMIAYGLNPDTAYSARDQVNQELKFAEDLYKKIGCMVINTAHRSIEETATLILEHMGLDEFDNTETH</sequence>
<evidence type="ECO:0000255" key="1">
    <source>
        <dbReference type="HAMAP-Rule" id="MF_00921"/>
    </source>
</evidence>
<keyword id="KW-0418">Kinase</keyword>
<keyword id="KW-0547">Nucleotide-binding</keyword>
<keyword id="KW-1185">Reference proteome</keyword>
<keyword id="KW-0723">Serine/threonine-protein kinase</keyword>
<keyword id="KW-0808">Transferase</keyword>
<accession>Q038S5</accession>
<dbReference type="EC" id="2.7.11.32" evidence="1"/>
<dbReference type="EC" id="2.7.4.27" evidence="1"/>
<dbReference type="EMBL" id="CP000423">
    <property type="protein sequence ID" value="ABJ70297.1"/>
    <property type="molecule type" value="Genomic_DNA"/>
</dbReference>
<dbReference type="RefSeq" id="WP_003565675.1">
    <property type="nucleotide sequence ID" value="NC_008526.1"/>
</dbReference>
<dbReference type="RefSeq" id="YP_806739.1">
    <property type="nucleotide sequence ID" value="NC_008526.1"/>
</dbReference>
<dbReference type="SMR" id="Q038S5"/>
<dbReference type="STRING" id="321967.LSEI_1522"/>
<dbReference type="PaxDb" id="321967-LSEI_1522"/>
<dbReference type="KEGG" id="lca:LSEI_1522"/>
<dbReference type="PATRIC" id="fig|321967.11.peg.1504"/>
<dbReference type="HOGENOM" id="CLU_046206_2_1_9"/>
<dbReference type="Proteomes" id="UP000001651">
    <property type="component" value="Chromosome"/>
</dbReference>
<dbReference type="GO" id="GO:0043531">
    <property type="term" value="F:ADP binding"/>
    <property type="evidence" value="ECO:0007669"/>
    <property type="project" value="UniProtKB-UniRule"/>
</dbReference>
<dbReference type="GO" id="GO:0005524">
    <property type="term" value="F:ATP binding"/>
    <property type="evidence" value="ECO:0007669"/>
    <property type="project" value="InterPro"/>
</dbReference>
<dbReference type="GO" id="GO:0016776">
    <property type="term" value="F:phosphotransferase activity, phosphate group as acceptor"/>
    <property type="evidence" value="ECO:0007669"/>
    <property type="project" value="UniProtKB-UniRule"/>
</dbReference>
<dbReference type="GO" id="GO:0004674">
    <property type="term" value="F:protein serine/threonine kinase activity"/>
    <property type="evidence" value="ECO:0007669"/>
    <property type="project" value="UniProtKB-UniRule"/>
</dbReference>
<dbReference type="HAMAP" id="MF_00921">
    <property type="entry name" value="PDRP"/>
    <property type="match status" value="1"/>
</dbReference>
<dbReference type="InterPro" id="IPR005177">
    <property type="entry name" value="Kinase-pyrophosphorylase"/>
</dbReference>
<dbReference type="InterPro" id="IPR027417">
    <property type="entry name" value="P-loop_NTPase"/>
</dbReference>
<dbReference type="InterPro" id="IPR026565">
    <property type="entry name" value="PPDK_reg"/>
</dbReference>
<dbReference type="NCBIfam" id="NF003742">
    <property type="entry name" value="PRK05339.1"/>
    <property type="match status" value="1"/>
</dbReference>
<dbReference type="PANTHER" id="PTHR31756">
    <property type="entry name" value="PYRUVATE, PHOSPHATE DIKINASE REGULATORY PROTEIN 1, CHLOROPLASTIC"/>
    <property type="match status" value="1"/>
</dbReference>
<dbReference type="PANTHER" id="PTHR31756:SF3">
    <property type="entry name" value="PYRUVATE, PHOSPHATE DIKINASE REGULATORY PROTEIN 1, CHLOROPLASTIC"/>
    <property type="match status" value="1"/>
</dbReference>
<dbReference type="Pfam" id="PF03618">
    <property type="entry name" value="Kinase-PPPase"/>
    <property type="match status" value="1"/>
</dbReference>
<dbReference type="SUPFAM" id="SSF52540">
    <property type="entry name" value="P-loop containing nucleoside triphosphate hydrolases"/>
    <property type="match status" value="1"/>
</dbReference>